<proteinExistence type="inferred from homology"/>
<name>MRAZ_CUPTR</name>
<protein>
    <recommendedName>
        <fullName>Transcriptional regulator MraZ</fullName>
    </recommendedName>
</protein>
<evidence type="ECO:0000255" key="1">
    <source>
        <dbReference type="HAMAP-Rule" id="MF_01008"/>
    </source>
</evidence>
<evidence type="ECO:0000255" key="2">
    <source>
        <dbReference type="PROSITE-ProRule" id="PRU01076"/>
    </source>
</evidence>
<feature type="chain" id="PRO_1000134784" description="Transcriptional regulator MraZ">
    <location>
        <begin position="1"/>
        <end position="142"/>
    </location>
</feature>
<feature type="domain" description="SpoVT-AbrB 1" evidence="2">
    <location>
        <begin position="5"/>
        <end position="51"/>
    </location>
</feature>
<feature type="domain" description="SpoVT-AbrB 2" evidence="2">
    <location>
        <begin position="77"/>
        <end position="120"/>
    </location>
</feature>
<organism>
    <name type="scientific">Cupriavidus taiwanensis (strain DSM 17343 / BCRC 17206 / CCUG 44338 / CIP 107171 / LMG 19424 / R1)</name>
    <name type="common">Ralstonia taiwanensis (strain LMG 19424)</name>
    <dbReference type="NCBI Taxonomy" id="977880"/>
    <lineage>
        <taxon>Bacteria</taxon>
        <taxon>Pseudomonadati</taxon>
        <taxon>Pseudomonadota</taxon>
        <taxon>Betaproteobacteria</taxon>
        <taxon>Burkholderiales</taxon>
        <taxon>Burkholderiaceae</taxon>
        <taxon>Cupriavidus</taxon>
    </lineage>
</organism>
<accession>B3R6W8</accession>
<keyword id="KW-0963">Cytoplasm</keyword>
<keyword id="KW-0238">DNA-binding</keyword>
<keyword id="KW-0677">Repeat</keyword>
<keyword id="KW-0804">Transcription</keyword>
<keyword id="KW-0805">Transcription regulation</keyword>
<reference key="1">
    <citation type="journal article" date="2008" name="Genome Res.">
        <title>Genome sequence of the beta-rhizobium Cupriavidus taiwanensis and comparative genomics of rhizobia.</title>
        <authorList>
            <person name="Amadou C."/>
            <person name="Pascal G."/>
            <person name="Mangenot S."/>
            <person name="Glew M."/>
            <person name="Bontemps C."/>
            <person name="Capela D."/>
            <person name="Carrere S."/>
            <person name="Cruveiller S."/>
            <person name="Dossat C."/>
            <person name="Lajus A."/>
            <person name="Marchetti M."/>
            <person name="Poinsot V."/>
            <person name="Rouy Z."/>
            <person name="Servin B."/>
            <person name="Saad M."/>
            <person name="Schenowitz C."/>
            <person name="Barbe V."/>
            <person name="Batut J."/>
            <person name="Medigue C."/>
            <person name="Masson-Boivin C."/>
        </authorList>
    </citation>
    <scope>NUCLEOTIDE SEQUENCE [LARGE SCALE GENOMIC DNA]</scope>
    <source>
        <strain>DSM 17343 / BCRC 17206 / CCUG 44338 / CIP 107171 / LMG 19424 / R1</strain>
    </source>
</reference>
<comment type="subunit">
    <text evidence="1">Forms oligomers.</text>
</comment>
<comment type="subcellular location">
    <subcellularLocation>
        <location evidence="1">Cytoplasm</location>
        <location evidence="1">Nucleoid</location>
    </subcellularLocation>
</comment>
<comment type="similarity">
    <text evidence="1">Belongs to the MraZ family.</text>
</comment>
<sequence>MFQGASALSLDAKGRMSIPSRHREALQQQAEGRVTLTKHPDGCLLLFPRPEWETFRTRIAALPMDAHWWKRIFLGNAADVEMDGAGRVLIAPELRSAAMLDKEVMLLGMGSHFEVWDAATYAAKEQQAMAQGMPEALKNFSF</sequence>
<gene>
    <name evidence="1" type="primary">mraZ</name>
    <name type="ordered locus">RALTA_A2738</name>
</gene>
<dbReference type="EMBL" id="CU633749">
    <property type="protein sequence ID" value="CAQ70668.1"/>
    <property type="molecule type" value="Genomic_DNA"/>
</dbReference>
<dbReference type="RefSeq" id="WP_010814778.1">
    <property type="nucleotide sequence ID" value="NC_010528.1"/>
</dbReference>
<dbReference type="SMR" id="B3R6W8"/>
<dbReference type="GeneID" id="29761743"/>
<dbReference type="KEGG" id="cti:RALTA_A2738"/>
<dbReference type="eggNOG" id="COG2001">
    <property type="taxonomic scope" value="Bacteria"/>
</dbReference>
<dbReference type="HOGENOM" id="CLU_107907_2_1_4"/>
<dbReference type="BioCyc" id="CTAI977880:RALTA_RS13325-MONOMER"/>
<dbReference type="Proteomes" id="UP000001692">
    <property type="component" value="Chromosome 1"/>
</dbReference>
<dbReference type="GO" id="GO:0005737">
    <property type="term" value="C:cytoplasm"/>
    <property type="evidence" value="ECO:0007669"/>
    <property type="project" value="UniProtKB-UniRule"/>
</dbReference>
<dbReference type="GO" id="GO:0009295">
    <property type="term" value="C:nucleoid"/>
    <property type="evidence" value="ECO:0007669"/>
    <property type="project" value="UniProtKB-SubCell"/>
</dbReference>
<dbReference type="GO" id="GO:0003700">
    <property type="term" value="F:DNA-binding transcription factor activity"/>
    <property type="evidence" value="ECO:0007669"/>
    <property type="project" value="UniProtKB-UniRule"/>
</dbReference>
<dbReference type="GO" id="GO:0000976">
    <property type="term" value="F:transcription cis-regulatory region binding"/>
    <property type="evidence" value="ECO:0007669"/>
    <property type="project" value="TreeGrafter"/>
</dbReference>
<dbReference type="GO" id="GO:2000143">
    <property type="term" value="P:negative regulation of DNA-templated transcription initiation"/>
    <property type="evidence" value="ECO:0007669"/>
    <property type="project" value="TreeGrafter"/>
</dbReference>
<dbReference type="CDD" id="cd16321">
    <property type="entry name" value="MraZ_C"/>
    <property type="match status" value="1"/>
</dbReference>
<dbReference type="CDD" id="cd16320">
    <property type="entry name" value="MraZ_N"/>
    <property type="match status" value="1"/>
</dbReference>
<dbReference type="Gene3D" id="3.40.1550.20">
    <property type="entry name" value="Transcriptional regulator MraZ domain"/>
    <property type="match status" value="1"/>
</dbReference>
<dbReference type="HAMAP" id="MF_01008">
    <property type="entry name" value="MraZ"/>
    <property type="match status" value="1"/>
</dbReference>
<dbReference type="InterPro" id="IPR003444">
    <property type="entry name" value="MraZ"/>
</dbReference>
<dbReference type="InterPro" id="IPR035644">
    <property type="entry name" value="MraZ_C"/>
</dbReference>
<dbReference type="InterPro" id="IPR020603">
    <property type="entry name" value="MraZ_dom"/>
</dbReference>
<dbReference type="InterPro" id="IPR035642">
    <property type="entry name" value="MraZ_N"/>
</dbReference>
<dbReference type="InterPro" id="IPR038619">
    <property type="entry name" value="MraZ_sf"/>
</dbReference>
<dbReference type="InterPro" id="IPR007159">
    <property type="entry name" value="SpoVT-AbrB_dom"/>
</dbReference>
<dbReference type="InterPro" id="IPR037914">
    <property type="entry name" value="SpoVT-AbrB_sf"/>
</dbReference>
<dbReference type="NCBIfam" id="TIGR00242">
    <property type="entry name" value="division/cell wall cluster transcriptional repressor MraZ"/>
    <property type="match status" value="1"/>
</dbReference>
<dbReference type="PANTHER" id="PTHR34701">
    <property type="entry name" value="TRANSCRIPTIONAL REGULATOR MRAZ"/>
    <property type="match status" value="1"/>
</dbReference>
<dbReference type="PANTHER" id="PTHR34701:SF1">
    <property type="entry name" value="TRANSCRIPTIONAL REGULATOR MRAZ"/>
    <property type="match status" value="1"/>
</dbReference>
<dbReference type="Pfam" id="PF02381">
    <property type="entry name" value="MraZ"/>
    <property type="match status" value="2"/>
</dbReference>
<dbReference type="SUPFAM" id="SSF89447">
    <property type="entry name" value="AbrB/MazE/MraZ-like"/>
    <property type="match status" value="1"/>
</dbReference>
<dbReference type="PROSITE" id="PS51740">
    <property type="entry name" value="SPOVT_ABRB"/>
    <property type="match status" value="2"/>
</dbReference>